<organism>
    <name type="scientific">Cutibacterium acnes (strain DSM 16379 / KPA171202)</name>
    <name type="common">Propionibacterium acnes</name>
    <dbReference type="NCBI Taxonomy" id="267747"/>
    <lineage>
        <taxon>Bacteria</taxon>
        <taxon>Bacillati</taxon>
        <taxon>Actinomycetota</taxon>
        <taxon>Actinomycetes</taxon>
        <taxon>Propionibacteriales</taxon>
        <taxon>Propionibacteriaceae</taxon>
        <taxon>Cutibacterium</taxon>
    </lineage>
</organism>
<reference key="1">
    <citation type="journal article" date="2004" name="Science">
        <title>The complete genome sequence of Propionibacterium acnes, a commensal of human skin.</title>
        <authorList>
            <person name="Brueggemann H."/>
            <person name="Henne A."/>
            <person name="Hoster F."/>
            <person name="Liesegang H."/>
            <person name="Wiezer A."/>
            <person name="Strittmatter A."/>
            <person name="Hujer S."/>
            <person name="Duerre P."/>
            <person name="Gottschalk G."/>
        </authorList>
    </citation>
    <scope>NUCLEOTIDE SEQUENCE [LARGE SCALE GENOMIC DNA]</scope>
    <source>
        <strain>DSM 16379 / KPA171202</strain>
    </source>
</reference>
<proteinExistence type="inferred from homology"/>
<accession>Q6AAX3</accession>
<sequence length="258" mass="28384">MAKRIETKDLDIYYGSFHAVESVNLIVEPRTVTAFIGPSGCGKSTVLRTLNRMHEVIPGAYCTGKVELDGVDLYGKGVDPVAVRRNVGMVFQRANPFPAMSIRDNVVAGLKLNGVRDNKLLDEACEKSLRGANLWDEVKDRLERSGASLSGGQQQRLCIARAIAVEPEVLLMDEPCSALDPISTLAIEDLVSELKERFTVVIVTHNMQQAARVSDQTAFFNLKAQGEPGRLVEIDTTERIFSNPKEKATEDYISGRFG</sequence>
<protein>
    <recommendedName>
        <fullName evidence="1">Phosphate import ATP-binding protein PstB</fullName>
        <ecNumber evidence="1">7.3.2.1</ecNumber>
    </recommendedName>
    <alternativeName>
        <fullName evidence="1">ABC phosphate transporter</fullName>
    </alternativeName>
    <alternativeName>
        <fullName evidence="1">Phosphate-transporting ATPase</fullName>
    </alternativeName>
</protein>
<keyword id="KW-0067">ATP-binding</keyword>
<keyword id="KW-1003">Cell membrane</keyword>
<keyword id="KW-0472">Membrane</keyword>
<keyword id="KW-0547">Nucleotide-binding</keyword>
<keyword id="KW-0592">Phosphate transport</keyword>
<keyword id="KW-1278">Translocase</keyword>
<keyword id="KW-0813">Transport</keyword>
<feature type="chain" id="PRO_0000092857" description="Phosphate import ATP-binding protein PstB">
    <location>
        <begin position="1"/>
        <end position="258"/>
    </location>
</feature>
<feature type="domain" description="ABC transporter" evidence="1">
    <location>
        <begin position="5"/>
        <end position="247"/>
    </location>
</feature>
<feature type="binding site" evidence="1">
    <location>
        <begin position="37"/>
        <end position="44"/>
    </location>
    <ligand>
        <name>ATP</name>
        <dbReference type="ChEBI" id="CHEBI:30616"/>
    </ligand>
</feature>
<dbReference type="EC" id="7.3.2.1" evidence="1"/>
<dbReference type="EMBL" id="AE017283">
    <property type="protein sequence ID" value="AAT82093.1"/>
    <property type="molecule type" value="Genomic_DNA"/>
</dbReference>
<dbReference type="RefSeq" id="WP_002513066.1">
    <property type="nucleotide sequence ID" value="NZ_CP025935.1"/>
</dbReference>
<dbReference type="SMR" id="Q6AAX3"/>
<dbReference type="EnsemblBacteria" id="AAT82093">
    <property type="protein sequence ID" value="AAT82093"/>
    <property type="gene ID" value="PPA0338"/>
</dbReference>
<dbReference type="GeneID" id="92856321"/>
<dbReference type="KEGG" id="pac:PPA0338"/>
<dbReference type="eggNOG" id="COG1117">
    <property type="taxonomic scope" value="Bacteria"/>
</dbReference>
<dbReference type="HOGENOM" id="CLU_000604_1_22_11"/>
<dbReference type="Proteomes" id="UP000000603">
    <property type="component" value="Chromosome"/>
</dbReference>
<dbReference type="GO" id="GO:0005886">
    <property type="term" value="C:plasma membrane"/>
    <property type="evidence" value="ECO:0007669"/>
    <property type="project" value="UniProtKB-SubCell"/>
</dbReference>
<dbReference type="GO" id="GO:0005524">
    <property type="term" value="F:ATP binding"/>
    <property type="evidence" value="ECO:0007669"/>
    <property type="project" value="UniProtKB-KW"/>
</dbReference>
<dbReference type="GO" id="GO:0016887">
    <property type="term" value="F:ATP hydrolysis activity"/>
    <property type="evidence" value="ECO:0007669"/>
    <property type="project" value="InterPro"/>
</dbReference>
<dbReference type="GO" id="GO:0015415">
    <property type="term" value="F:ATPase-coupled phosphate ion transmembrane transporter activity"/>
    <property type="evidence" value="ECO:0007669"/>
    <property type="project" value="UniProtKB-EC"/>
</dbReference>
<dbReference type="GO" id="GO:0035435">
    <property type="term" value="P:phosphate ion transmembrane transport"/>
    <property type="evidence" value="ECO:0007669"/>
    <property type="project" value="InterPro"/>
</dbReference>
<dbReference type="CDD" id="cd03260">
    <property type="entry name" value="ABC_PstB_phosphate_transporter"/>
    <property type="match status" value="1"/>
</dbReference>
<dbReference type="Gene3D" id="3.40.50.300">
    <property type="entry name" value="P-loop containing nucleotide triphosphate hydrolases"/>
    <property type="match status" value="1"/>
</dbReference>
<dbReference type="InterPro" id="IPR003593">
    <property type="entry name" value="AAA+_ATPase"/>
</dbReference>
<dbReference type="InterPro" id="IPR003439">
    <property type="entry name" value="ABC_transporter-like_ATP-bd"/>
</dbReference>
<dbReference type="InterPro" id="IPR017871">
    <property type="entry name" value="ABC_transporter-like_CS"/>
</dbReference>
<dbReference type="InterPro" id="IPR027417">
    <property type="entry name" value="P-loop_NTPase"/>
</dbReference>
<dbReference type="InterPro" id="IPR005670">
    <property type="entry name" value="PstB-like"/>
</dbReference>
<dbReference type="NCBIfam" id="TIGR00972">
    <property type="entry name" value="3a0107s01c2"/>
    <property type="match status" value="1"/>
</dbReference>
<dbReference type="PANTHER" id="PTHR43423">
    <property type="entry name" value="ABC TRANSPORTER I FAMILY MEMBER 17"/>
    <property type="match status" value="1"/>
</dbReference>
<dbReference type="PANTHER" id="PTHR43423:SF1">
    <property type="entry name" value="ABC TRANSPORTER I FAMILY MEMBER 17"/>
    <property type="match status" value="1"/>
</dbReference>
<dbReference type="Pfam" id="PF00005">
    <property type="entry name" value="ABC_tran"/>
    <property type="match status" value="1"/>
</dbReference>
<dbReference type="SMART" id="SM00382">
    <property type="entry name" value="AAA"/>
    <property type="match status" value="1"/>
</dbReference>
<dbReference type="SUPFAM" id="SSF52540">
    <property type="entry name" value="P-loop containing nucleoside triphosphate hydrolases"/>
    <property type="match status" value="1"/>
</dbReference>
<dbReference type="PROSITE" id="PS00211">
    <property type="entry name" value="ABC_TRANSPORTER_1"/>
    <property type="match status" value="1"/>
</dbReference>
<dbReference type="PROSITE" id="PS50893">
    <property type="entry name" value="ABC_TRANSPORTER_2"/>
    <property type="match status" value="1"/>
</dbReference>
<dbReference type="PROSITE" id="PS51238">
    <property type="entry name" value="PSTB"/>
    <property type="match status" value="1"/>
</dbReference>
<name>PSTB_CUTAK</name>
<evidence type="ECO:0000255" key="1">
    <source>
        <dbReference type="HAMAP-Rule" id="MF_01702"/>
    </source>
</evidence>
<gene>
    <name evidence="1" type="primary">pstB</name>
    <name type="ordered locus">PPA0338</name>
</gene>
<comment type="function">
    <text evidence="1">Part of the ABC transporter complex PstSACB involved in phosphate import. Responsible for energy coupling to the transport system.</text>
</comment>
<comment type="catalytic activity">
    <reaction evidence="1">
        <text>phosphate(out) + ATP + H2O = ADP + 2 phosphate(in) + H(+)</text>
        <dbReference type="Rhea" id="RHEA:24440"/>
        <dbReference type="ChEBI" id="CHEBI:15377"/>
        <dbReference type="ChEBI" id="CHEBI:15378"/>
        <dbReference type="ChEBI" id="CHEBI:30616"/>
        <dbReference type="ChEBI" id="CHEBI:43474"/>
        <dbReference type="ChEBI" id="CHEBI:456216"/>
        <dbReference type="EC" id="7.3.2.1"/>
    </reaction>
</comment>
<comment type="subunit">
    <text evidence="1">The complex is composed of two ATP-binding proteins (PstB), two transmembrane proteins (PstC and PstA) and a solute-binding protein (PstS).</text>
</comment>
<comment type="subcellular location">
    <subcellularLocation>
        <location evidence="1">Cell membrane</location>
        <topology evidence="1">Peripheral membrane protein</topology>
    </subcellularLocation>
</comment>
<comment type="similarity">
    <text evidence="1">Belongs to the ABC transporter superfamily. Phosphate importer (TC 3.A.1.7) family.</text>
</comment>